<dbReference type="EMBL" id="AF052688">
    <property type="protein sequence ID" value="AAC06236.1"/>
    <property type="molecule type" value="Genomic_DNA"/>
</dbReference>
<dbReference type="EMBL" id="CU329671">
    <property type="protein sequence ID" value="CAA19293.1"/>
    <property type="molecule type" value="Genomic_DNA"/>
</dbReference>
<dbReference type="EMBL" id="D89224">
    <property type="protein sequence ID" value="BAA13885.1"/>
    <property type="molecule type" value="mRNA"/>
</dbReference>
<dbReference type="PIR" id="T40485">
    <property type="entry name" value="T40485"/>
</dbReference>
<dbReference type="RefSeq" id="NP_596430.1">
    <property type="nucleotide sequence ID" value="NM_001022349.2"/>
</dbReference>
<dbReference type="SMR" id="O43000"/>
<dbReference type="BioGRID" id="276871">
    <property type="interactions" value="66"/>
</dbReference>
<dbReference type="FunCoup" id="O43000">
    <property type="interactions" value="288"/>
</dbReference>
<dbReference type="STRING" id="284812.O43000"/>
<dbReference type="TCDB" id="2.A.1.14.17">
    <property type="family name" value="the major facilitator superfamily (mfs)"/>
</dbReference>
<dbReference type="iPTMnet" id="O43000"/>
<dbReference type="PaxDb" id="4896-SPBC2G2.01c.1"/>
<dbReference type="EnsemblFungi" id="SPBC2G2.01c.1">
    <property type="protein sequence ID" value="SPBC2G2.01c.1:pep"/>
    <property type="gene ID" value="SPBC2G2.01c"/>
</dbReference>
<dbReference type="PomBase" id="SPBC2G2.01c">
    <property type="gene designation" value="liz1"/>
</dbReference>
<dbReference type="VEuPathDB" id="FungiDB:SPBC2G2.01c"/>
<dbReference type="eggNOG" id="KOG2533">
    <property type="taxonomic scope" value="Eukaryota"/>
</dbReference>
<dbReference type="HOGENOM" id="CLU_001265_4_2_1"/>
<dbReference type="InParanoid" id="O43000"/>
<dbReference type="OMA" id="IALILWT"/>
<dbReference type="PhylomeDB" id="O43000"/>
<dbReference type="PRO" id="PR:O43000"/>
<dbReference type="Proteomes" id="UP000002485">
    <property type="component" value="Chromosome II"/>
</dbReference>
<dbReference type="GO" id="GO:0005794">
    <property type="term" value="C:Golgi apparatus"/>
    <property type="evidence" value="ECO:0007005"/>
    <property type="project" value="PomBase"/>
</dbReference>
<dbReference type="GO" id="GO:0005886">
    <property type="term" value="C:plasma membrane"/>
    <property type="evidence" value="ECO:0000314"/>
    <property type="project" value="PomBase"/>
</dbReference>
<dbReference type="GO" id="GO:0015233">
    <property type="term" value="F:pantothenate transmembrane transporter activity"/>
    <property type="evidence" value="ECO:0000315"/>
    <property type="project" value="PomBase"/>
</dbReference>
<dbReference type="GO" id="GO:0098717">
    <property type="term" value="P:pantothenate import across plasma membrane"/>
    <property type="evidence" value="ECO:0000315"/>
    <property type="project" value="PomBase"/>
</dbReference>
<dbReference type="CDD" id="cd17327">
    <property type="entry name" value="MFS_FEN2_like"/>
    <property type="match status" value="1"/>
</dbReference>
<dbReference type="FunFam" id="1.20.1250.20:FF:000386">
    <property type="entry name" value="MFS general substrate transporter"/>
    <property type="match status" value="1"/>
</dbReference>
<dbReference type="FunFam" id="1.20.1250.20:FF:000065">
    <property type="entry name" value="Putative MFS pantothenate transporter"/>
    <property type="match status" value="1"/>
</dbReference>
<dbReference type="Gene3D" id="1.20.1250.20">
    <property type="entry name" value="MFS general substrate transporter like domains"/>
    <property type="match status" value="1"/>
</dbReference>
<dbReference type="InterPro" id="IPR011701">
    <property type="entry name" value="MFS"/>
</dbReference>
<dbReference type="InterPro" id="IPR020846">
    <property type="entry name" value="MFS_dom"/>
</dbReference>
<dbReference type="InterPro" id="IPR036259">
    <property type="entry name" value="MFS_trans_sf"/>
</dbReference>
<dbReference type="PANTHER" id="PTHR43791:SF4">
    <property type="entry name" value="PANTOTHENATE TRANSPORTER FEN2"/>
    <property type="match status" value="1"/>
</dbReference>
<dbReference type="PANTHER" id="PTHR43791">
    <property type="entry name" value="PERMEASE-RELATED"/>
    <property type="match status" value="1"/>
</dbReference>
<dbReference type="Pfam" id="PF07690">
    <property type="entry name" value="MFS_1"/>
    <property type="match status" value="1"/>
</dbReference>
<dbReference type="SUPFAM" id="SSF103473">
    <property type="entry name" value="MFS general substrate transporter"/>
    <property type="match status" value="1"/>
</dbReference>
<dbReference type="PROSITE" id="PS50850">
    <property type="entry name" value="MFS"/>
    <property type="match status" value="1"/>
</dbReference>
<organism>
    <name type="scientific">Schizosaccharomyces pombe (strain 972 / ATCC 24843)</name>
    <name type="common">Fission yeast</name>
    <dbReference type="NCBI Taxonomy" id="284812"/>
    <lineage>
        <taxon>Eukaryota</taxon>
        <taxon>Fungi</taxon>
        <taxon>Dikarya</taxon>
        <taxon>Ascomycota</taxon>
        <taxon>Taphrinomycotina</taxon>
        <taxon>Schizosaccharomycetes</taxon>
        <taxon>Schizosaccharomycetales</taxon>
        <taxon>Schizosaccharomycetaceae</taxon>
        <taxon>Schizosaccharomyces</taxon>
    </lineage>
</organism>
<keyword id="KW-1003">Cell membrane</keyword>
<keyword id="KW-0472">Membrane</keyword>
<keyword id="KW-1185">Reference proteome</keyword>
<keyword id="KW-0812">Transmembrane</keyword>
<keyword id="KW-1133">Transmembrane helix</keyword>
<keyword id="KW-0813">Transport</keyword>
<name>LIZ1_SCHPO</name>
<protein>
    <recommendedName>
        <fullName>Pantothenate transporter liz1</fullName>
    </recommendedName>
</protein>
<accession>O43000</accession>
<accession>P78874</accession>
<accession>Q1L845</accession>
<proteinExistence type="evidence at transcript level"/>
<comment type="function">
    <text evidence="2">Transports pantothenate into the cell.</text>
</comment>
<comment type="subcellular location">
    <subcellularLocation>
        <location evidence="2 3">Cell membrane</location>
        <topology evidence="2 3">Multi-pass membrane protein</topology>
    </subcellularLocation>
</comment>
<comment type="similarity">
    <text evidence="4">Belongs to the major facilitator superfamily. Allantoate permease family.</text>
</comment>
<gene>
    <name type="primary">liz1</name>
    <name type="ORF">SPBC2G2.01c</name>
    <name type="ORF">SPBC4B4.13c</name>
</gene>
<sequence length="514" mass="57964">MALLNRLAKTFSPYYGLNKVEQKLLIKIDWFILSYCCVSYFINYLDRSSINNAYLSGMQEDLKMHGNELQDINVVFTCGYIIGQLPGSYALQRVPARLWFSVMNILWGLMTIFSFAVHSVRALMILRFFMAVAEASTFAGTHYILGAWYKESELCKRAGIFSASGLVGTMFAGYLQTAVHSSLNGKGGLSGWRWLFIIDGILTIPLSLYGLFLFPDVPETTKAPYFTEQEKELSFKRLPARPKKKPLTLKAIKDIVRSWRIYGLCILWIFSGETQAIAVNVLMGQWMKWSNKFSVAQINNYPTVITAVGVVSTLGASVISDKLAGNPRWPFGLFLCVITTVSATILLAWNVPDGAKFFAYFASGCTYAGQAVWFSWANDICRDNDQERGVVVFLMNMCQNIWHIWWAPIMYPNTDTPRFIKGLIGLLVVGGIVFVSSCIVSYMQIRDKRIKRSIQDAKDFDDVFTEHESLELKKIGKNDEESLNTTNAVKEISSPGLVITRQRISMPKETNAQD</sequence>
<feature type="chain" id="PRO_0000121370" description="Pantothenate transporter liz1">
    <location>
        <begin position="1"/>
        <end position="514"/>
    </location>
</feature>
<feature type="transmembrane region" description="Helical" evidence="1">
    <location>
        <begin position="24"/>
        <end position="44"/>
    </location>
</feature>
<feature type="transmembrane region" description="Helical" evidence="1">
    <location>
        <begin position="72"/>
        <end position="92"/>
    </location>
</feature>
<feature type="transmembrane region" description="Helical" evidence="1">
    <location>
        <begin position="98"/>
        <end position="118"/>
    </location>
</feature>
<feature type="transmembrane region" description="Helical" evidence="1">
    <location>
        <begin position="128"/>
        <end position="148"/>
    </location>
</feature>
<feature type="transmembrane region" description="Helical" evidence="1">
    <location>
        <begin position="159"/>
        <end position="179"/>
    </location>
</feature>
<feature type="transmembrane region" description="Helical" evidence="1">
    <location>
        <begin position="194"/>
        <end position="214"/>
    </location>
</feature>
<feature type="transmembrane region" description="Helical" evidence="1">
    <location>
        <begin position="263"/>
        <end position="283"/>
    </location>
</feature>
<feature type="transmembrane region" description="Helical" evidence="1">
    <location>
        <begin position="300"/>
        <end position="320"/>
    </location>
</feature>
<feature type="transmembrane region" description="Helical" evidence="1">
    <location>
        <begin position="329"/>
        <end position="349"/>
    </location>
</feature>
<feature type="transmembrane region" description="Helical" evidence="1">
    <location>
        <begin position="357"/>
        <end position="377"/>
    </location>
</feature>
<feature type="transmembrane region" description="Helical" evidence="1">
    <location>
        <begin position="390"/>
        <end position="410"/>
    </location>
</feature>
<feature type="transmembrane region" description="Helical" evidence="1">
    <location>
        <begin position="423"/>
        <end position="443"/>
    </location>
</feature>
<feature type="sequence conflict" description="In Ref. 3; BAA13885." evidence="4" ref="3">
    <original>IRD</original>
    <variation>SAI</variation>
    <location>
        <begin position="445"/>
        <end position="447"/>
    </location>
</feature>
<evidence type="ECO:0000255" key="1"/>
<evidence type="ECO:0000269" key="2">
    <source>
    </source>
</evidence>
<evidence type="ECO:0000269" key="3">
    <source>
    </source>
</evidence>
<evidence type="ECO:0000305" key="4"/>
<reference key="1">
    <citation type="journal article" date="1999" name="Mol. Biol. Cell">
        <title>Liz1p, a novel fission yeast membrane protein, is required for normal cell division when ribonucleotide reductase is inhibited.</title>
        <authorList>
            <person name="Moynihan E.B."/>
            <person name="Enoch T."/>
        </authorList>
    </citation>
    <scope>NUCLEOTIDE SEQUENCE [GENOMIC DNA]</scope>
    <scope>SUBCELLULAR LOCATION</scope>
</reference>
<reference key="2">
    <citation type="journal article" date="2002" name="Nature">
        <title>The genome sequence of Schizosaccharomyces pombe.</title>
        <authorList>
            <person name="Wood V."/>
            <person name="Gwilliam R."/>
            <person name="Rajandream M.A."/>
            <person name="Lyne M.H."/>
            <person name="Lyne R."/>
            <person name="Stewart A."/>
            <person name="Sgouros J.G."/>
            <person name="Peat N."/>
            <person name="Hayles J."/>
            <person name="Baker S.G."/>
            <person name="Basham D."/>
            <person name="Bowman S."/>
            <person name="Brooks K."/>
            <person name="Brown D."/>
            <person name="Brown S."/>
            <person name="Chillingworth T."/>
            <person name="Churcher C.M."/>
            <person name="Collins M."/>
            <person name="Connor R."/>
            <person name="Cronin A."/>
            <person name="Davis P."/>
            <person name="Feltwell T."/>
            <person name="Fraser A."/>
            <person name="Gentles S."/>
            <person name="Goble A."/>
            <person name="Hamlin N."/>
            <person name="Harris D.E."/>
            <person name="Hidalgo J."/>
            <person name="Hodgson G."/>
            <person name="Holroyd S."/>
            <person name="Hornsby T."/>
            <person name="Howarth S."/>
            <person name="Huckle E.J."/>
            <person name="Hunt S."/>
            <person name="Jagels K."/>
            <person name="James K.D."/>
            <person name="Jones L."/>
            <person name="Jones M."/>
            <person name="Leather S."/>
            <person name="McDonald S."/>
            <person name="McLean J."/>
            <person name="Mooney P."/>
            <person name="Moule S."/>
            <person name="Mungall K.L."/>
            <person name="Murphy L.D."/>
            <person name="Niblett D."/>
            <person name="Odell C."/>
            <person name="Oliver K."/>
            <person name="O'Neil S."/>
            <person name="Pearson D."/>
            <person name="Quail M.A."/>
            <person name="Rabbinowitsch E."/>
            <person name="Rutherford K.M."/>
            <person name="Rutter S."/>
            <person name="Saunders D."/>
            <person name="Seeger K."/>
            <person name="Sharp S."/>
            <person name="Skelton J."/>
            <person name="Simmonds M.N."/>
            <person name="Squares R."/>
            <person name="Squares S."/>
            <person name="Stevens K."/>
            <person name="Taylor K."/>
            <person name="Taylor R.G."/>
            <person name="Tivey A."/>
            <person name="Walsh S.V."/>
            <person name="Warren T."/>
            <person name="Whitehead S."/>
            <person name="Woodward J.R."/>
            <person name="Volckaert G."/>
            <person name="Aert R."/>
            <person name="Robben J."/>
            <person name="Grymonprez B."/>
            <person name="Weltjens I."/>
            <person name="Vanstreels E."/>
            <person name="Rieger M."/>
            <person name="Schaefer M."/>
            <person name="Mueller-Auer S."/>
            <person name="Gabel C."/>
            <person name="Fuchs M."/>
            <person name="Duesterhoeft A."/>
            <person name="Fritzc C."/>
            <person name="Holzer E."/>
            <person name="Moestl D."/>
            <person name="Hilbert H."/>
            <person name="Borzym K."/>
            <person name="Langer I."/>
            <person name="Beck A."/>
            <person name="Lehrach H."/>
            <person name="Reinhardt R."/>
            <person name="Pohl T.M."/>
            <person name="Eger P."/>
            <person name="Zimmermann W."/>
            <person name="Wedler H."/>
            <person name="Wambutt R."/>
            <person name="Purnelle B."/>
            <person name="Goffeau A."/>
            <person name="Cadieu E."/>
            <person name="Dreano S."/>
            <person name="Gloux S."/>
            <person name="Lelaure V."/>
            <person name="Mottier S."/>
            <person name="Galibert F."/>
            <person name="Aves S.J."/>
            <person name="Xiang Z."/>
            <person name="Hunt C."/>
            <person name="Moore K."/>
            <person name="Hurst S.M."/>
            <person name="Lucas M."/>
            <person name="Rochet M."/>
            <person name="Gaillardin C."/>
            <person name="Tallada V.A."/>
            <person name="Garzon A."/>
            <person name="Thode G."/>
            <person name="Daga R.R."/>
            <person name="Cruzado L."/>
            <person name="Jimenez J."/>
            <person name="Sanchez M."/>
            <person name="del Rey F."/>
            <person name="Benito J."/>
            <person name="Dominguez A."/>
            <person name="Revuelta J.L."/>
            <person name="Moreno S."/>
            <person name="Armstrong J."/>
            <person name="Forsburg S.L."/>
            <person name="Cerutti L."/>
            <person name="Lowe T."/>
            <person name="McCombie W.R."/>
            <person name="Paulsen I."/>
            <person name="Potashkin J."/>
            <person name="Shpakovski G.V."/>
            <person name="Ussery D."/>
            <person name="Barrell B.G."/>
            <person name="Nurse P."/>
        </authorList>
    </citation>
    <scope>NUCLEOTIDE SEQUENCE [LARGE SCALE GENOMIC DNA]</scope>
    <source>
        <strain>972 / ATCC 24843</strain>
    </source>
</reference>
<reference key="3">
    <citation type="journal article" date="1997" name="DNA Res.">
        <title>Identification of open reading frames in Schizosaccharomyces pombe cDNAs.</title>
        <authorList>
            <person name="Yoshioka S."/>
            <person name="Kato K."/>
            <person name="Nakai K."/>
            <person name="Okayama H."/>
            <person name="Nojima H."/>
        </authorList>
    </citation>
    <scope>NUCLEOTIDE SEQUENCE [LARGE SCALE MRNA] OF 144-448</scope>
    <source>
        <strain>PR745</strain>
    </source>
</reference>
<reference key="4">
    <citation type="journal article" date="2004" name="Eukaryot. Cell">
        <title>Cell division defects of Schizosaccharomyces pombe liz1- mutants are caused by defects in pantothenate uptake.</title>
        <authorList>
            <person name="Stolz J."/>
            <person name="Caspari T."/>
            <person name="Carr A.M."/>
            <person name="Sauer N."/>
        </authorList>
    </citation>
    <scope>FUNCTION</scope>
    <scope>SUBCELLULAR LOCATION</scope>
</reference>